<protein>
    <recommendedName>
        <fullName evidence="1">N-succinylglutamate 5-semialdehyde dehydrogenase</fullName>
        <ecNumber evidence="1">1.2.1.71</ecNumber>
    </recommendedName>
    <alternativeName>
        <fullName evidence="1">Succinylglutamic semialdehyde dehydrogenase</fullName>
        <shortName evidence="1">SGSD</shortName>
    </alternativeName>
</protein>
<name>ASTD_ECO27</name>
<dbReference type="EC" id="1.2.1.71" evidence="1"/>
<dbReference type="EMBL" id="FM180568">
    <property type="protein sequence ID" value="CAS09422.1"/>
    <property type="molecule type" value="Genomic_DNA"/>
</dbReference>
<dbReference type="RefSeq" id="WP_000177314.1">
    <property type="nucleotide sequence ID" value="NC_011601.1"/>
</dbReference>
<dbReference type="SMR" id="B7USC7"/>
<dbReference type="KEGG" id="ecg:E2348C_1874"/>
<dbReference type="HOGENOM" id="CLU_005391_1_0_6"/>
<dbReference type="UniPathway" id="UPA00185">
    <property type="reaction ID" value="UER00282"/>
</dbReference>
<dbReference type="Proteomes" id="UP000008205">
    <property type="component" value="Chromosome"/>
</dbReference>
<dbReference type="GO" id="GO:0004030">
    <property type="term" value="F:aldehyde dehydrogenase [NAD(P)+] activity"/>
    <property type="evidence" value="ECO:0007669"/>
    <property type="project" value="UniProtKB-ARBA"/>
</dbReference>
<dbReference type="GO" id="GO:0043824">
    <property type="term" value="F:succinylglutamate-semialdehyde dehydrogenase activity"/>
    <property type="evidence" value="ECO:0007669"/>
    <property type="project" value="UniProtKB-EC"/>
</dbReference>
<dbReference type="GO" id="GO:0019544">
    <property type="term" value="P:arginine catabolic process to glutamate"/>
    <property type="evidence" value="ECO:0007669"/>
    <property type="project" value="UniProtKB-UniRule"/>
</dbReference>
<dbReference type="GO" id="GO:0019545">
    <property type="term" value="P:arginine catabolic process to succinate"/>
    <property type="evidence" value="ECO:0007669"/>
    <property type="project" value="UniProtKB-UniRule"/>
</dbReference>
<dbReference type="CDD" id="cd07095">
    <property type="entry name" value="ALDH_SGSD_AstD"/>
    <property type="match status" value="1"/>
</dbReference>
<dbReference type="FunFam" id="3.40.309.10:FF:000013">
    <property type="entry name" value="N-succinylglutamate 5-semialdehyde dehydrogenase"/>
    <property type="match status" value="1"/>
</dbReference>
<dbReference type="FunFam" id="3.40.605.10:FF:000010">
    <property type="entry name" value="N-succinylglutamate 5-semialdehyde dehydrogenase"/>
    <property type="match status" value="1"/>
</dbReference>
<dbReference type="Gene3D" id="3.40.605.10">
    <property type="entry name" value="Aldehyde Dehydrogenase, Chain A, domain 1"/>
    <property type="match status" value="1"/>
</dbReference>
<dbReference type="Gene3D" id="3.40.309.10">
    <property type="entry name" value="Aldehyde Dehydrogenase, Chain A, domain 2"/>
    <property type="match status" value="1"/>
</dbReference>
<dbReference type="HAMAP" id="MF_01174">
    <property type="entry name" value="Aldedh_AstD"/>
    <property type="match status" value="1"/>
</dbReference>
<dbReference type="InterPro" id="IPR016161">
    <property type="entry name" value="Ald_DH/histidinol_DH"/>
</dbReference>
<dbReference type="InterPro" id="IPR016163">
    <property type="entry name" value="Ald_DH_C"/>
</dbReference>
<dbReference type="InterPro" id="IPR016160">
    <property type="entry name" value="Ald_DH_CS_CYS"/>
</dbReference>
<dbReference type="InterPro" id="IPR029510">
    <property type="entry name" value="Ald_DH_CS_GLU"/>
</dbReference>
<dbReference type="InterPro" id="IPR016162">
    <property type="entry name" value="Ald_DH_N"/>
</dbReference>
<dbReference type="InterPro" id="IPR015590">
    <property type="entry name" value="Aldehyde_DH_dom"/>
</dbReference>
<dbReference type="InterPro" id="IPR017649">
    <property type="entry name" value="SuccinylGlu_semiald_DH_AstD"/>
</dbReference>
<dbReference type="NCBIfam" id="TIGR03240">
    <property type="entry name" value="arg_catab_astD"/>
    <property type="match status" value="1"/>
</dbReference>
<dbReference type="NCBIfam" id="NF006992">
    <property type="entry name" value="PRK09457.1"/>
    <property type="match status" value="1"/>
</dbReference>
<dbReference type="PANTHER" id="PTHR11699">
    <property type="entry name" value="ALDEHYDE DEHYDROGENASE-RELATED"/>
    <property type="match status" value="1"/>
</dbReference>
<dbReference type="Pfam" id="PF00171">
    <property type="entry name" value="Aldedh"/>
    <property type="match status" value="1"/>
</dbReference>
<dbReference type="SUPFAM" id="SSF53720">
    <property type="entry name" value="ALDH-like"/>
    <property type="match status" value="1"/>
</dbReference>
<dbReference type="PROSITE" id="PS00070">
    <property type="entry name" value="ALDEHYDE_DEHYDR_CYS"/>
    <property type="match status" value="1"/>
</dbReference>
<dbReference type="PROSITE" id="PS00687">
    <property type="entry name" value="ALDEHYDE_DEHYDR_GLU"/>
    <property type="match status" value="1"/>
</dbReference>
<organism>
    <name type="scientific">Escherichia coli O127:H6 (strain E2348/69 / EPEC)</name>
    <dbReference type="NCBI Taxonomy" id="574521"/>
    <lineage>
        <taxon>Bacteria</taxon>
        <taxon>Pseudomonadati</taxon>
        <taxon>Pseudomonadota</taxon>
        <taxon>Gammaproteobacteria</taxon>
        <taxon>Enterobacterales</taxon>
        <taxon>Enterobacteriaceae</taxon>
        <taxon>Escherichia</taxon>
    </lineage>
</organism>
<evidence type="ECO:0000255" key="1">
    <source>
        <dbReference type="HAMAP-Rule" id="MF_01174"/>
    </source>
</evidence>
<accession>B7USC7</accession>
<proteinExistence type="inferred from homology"/>
<keyword id="KW-0056">Arginine metabolism</keyword>
<keyword id="KW-0520">NAD</keyword>
<keyword id="KW-0560">Oxidoreductase</keyword>
<keyword id="KW-1185">Reference proteome</keyword>
<gene>
    <name evidence="1" type="primary">astD</name>
    <name type="ordered locus">E2348C_1874</name>
</gene>
<comment type="function">
    <text evidence="1">Catalyzes the NAD-dependent reduction of succinylglutamate semialdehyde into succinylglutamate.</text>
</comment>
<comment type="catalytic activity">
    <reaction evidence="1">
        <text>N-succinyl-L-glutamate 5-semialdehyde + NAD(+) + H2O = N-succinyl-L-glutamate + NADH + 2 H(+)</text>
        <dbReference type="Rhea" id="RHEA:10812"/>
        <dbReference type="ChEBI" id="CHEBI:15377"/>
        <dbReference type="ChEBI" id="CHEBI:15378"/>
        <dbReference type="ChEBI" id="CHEBI:57540"/>
        <dbReference type="ChEBI" id="CHEBI:57945"/>
        <dbReference type="ChEBI" id="CHEBI:58520"/>
        <dbReference type="ChEBI" id="CHEBI:58763"/>
        <dbReference type="EC" id="1.2.1.71"/>
    </reaction>
</comment>
<comment type="pathway">
    <text evidence="1">Amino-acid degradation; L-arginine degradation via AST pathway; L-glutamate and succinate from L-arginine: step 4/5.</text>
</comment>
<comment type="similarity">
    <text evidence="1">Belongs to the aldehyde dehydrogenase family. AstD subfamily.</text>
</comment>
<reference key="1">
    <citation type="journal article" date="2009" name="J. Bacteriol.">
        <title>Complete genome sequence and comparative genome analysis of enteropathogenic Escherichia coli O127:H6 strain E2348/69.</title>
        <authorList>
            <person name="Iguchi A."/>
            <person name="Thomson N.R."/>
            <person name="Ogura Y."/>
            <person name="Saunders D."/>
            <person name="Ooka T."/>
            <person name="Henderson I.R."/>
            <person name="Harris D."/>
            <person name="Asadulghani M."/>
            <person name="Kurokawa K."/>
            <person name="Dean P."/>
            <person name="Kenny B."/>
            <person name="Quail M.A."/>
            <person name="Thurston S."/>
            <person name="Dougan G."/>
            <person name="Hayashi T."/>
            <person name="Parkhill J."/>
            <person name="Frankel G."/>
        </authorList>
    </citation>
    <scope>NUCLEOTIDE SEQUENCE [LARGE SCALE GENOMIC DNA]</scope>
    <source>
        <strain>E2348/69 / EPEC</strain>
    </source>
</reference>
<sequence length="492" mass="53062">MTLWINGDWVTGQGALRVKRNPVSGEVLWQGNDADAAQVGQACRAARAAFPRWARLSFGDRQVRVECFAGLLESNKAELTAIIARETGKPRWESATEVTAMINKIAISIKAYHVRTGEQRSEMPDGAASLRHRPHGVLAVFGPYNFPGHLPNGHIVPALLAGNTIIFKPSELTPWSGEAVMRLWQQAGLPPGVLNLVQGGRETGQALSALEDLDGLLFTGSANTGYQLHRQLSGQPEKILALEMGGNNPLIIDEVADIDAAVHLTIQSAFVTAGQRCTCARRLFLKSGTQGDAFLARLVAVSQRLTPGTWDDEPQPFIGGLISEQAAQQVVTAWQELEAMGGRTLLAPRLLQAGTSLLTPGIIEMTGVTGVPDEEVFGPLLRVWRYDNFDEAIRMANNTRFGLSCGLVSPEREKFDQLLLEARAGIVNWNKPLTGAASTAPFGGIGASGNHRPSAWYAADYCAWPMASLESDSLTLPATLNPGLDFSDEVVR</sequence>
<feature type="chain" id="PRO_1000164402" description="N-succinylglutamate 5-semialdehyde dehydrogenase">
    <location>
        <begin position="1"/>
        <end position="492"/>
    </location>
</feature>
<feature type="active site" evidence="1">
    <location>
        <position position="243"/>
    </location>
</feature>
<feature type="active site" evidence="1">
    <location>
        <position position="277"/>
    </location>
</feature>
<feature type="binding site" evidence="1">
    <location>
        <begin position="220"/>
        <end position="225"/>
    </location>
    <ligand>
        <name>NAD(+)</name>
        <dbReference type="ChEBI" id="CHEBI:57540"/>
    </ligand>
</feature>